<feature type="chain" id="PRO_0000344546" description="L-fucose mutarotase">
    <location>
        <begin position="1"/>
        <end position="144"/>
    </location>
</feature>
<feature type="active site" description="Proton donor" evidence="1">
    <location>
        <position position="22"/>
    </location>
</feature>
<feature type="binding site" evidence="1">
    <location>
        <position position="30"/>
    </location>
    <ligand>
        <name>substrate</name>
    </ligand>
</feature>
<feature type="binding site" evidence="1">
    <location>
        <position position="109"/>
    </location>
    <ligand>
        <name>substrate</name>
    </ligand>
</feature>
<feature type="binding site" evidence="1">
    <location>
        <begin position="131"/>
        <end position="133"/>
    </location>
    <ligand>
        <name>substrate</name>
    </ligand>
</feature>
<dbReference type="EC" id="5.1.3.29" evidence="1"/>
<dbReference type="EMBL" id="CP000057">
    <property type="protein sequence ID" value="AAX87763.1"/>
    <property type="molecule type" value="Genomic_DNA"/>
</dbReference>
<dbReference type="RefSeq" id="WP_005654478.1">
    <property type="nucleotide sequence ID" value="NC_007146.2"/>
</dbReference>
<dbReference type="SMR" id="Q4QMI4"/>
<dbReference type="GeneID" id="93219745"/>
<dbReference type="KEGG" id="hit:NTHI0867"/>
<dbReference type="HOGENOM" id="CLU_120075_1_0_6"/>
<dbReference type="UniPathway" id="UPA00956"/>
<dbReference type="Proteomes" id="UP000002525">
    <property type="component" value="Chromosome"/>
</dbReference>
<dbReference type="GO" id="GO:0005737">
    <property type="term" value="C:cytoplasm"/>
    <property type="evidence" value="ECO:0007669"/>
    <property type="project" value="UniProtKB-SubCell"/>
</dbReference>
<dbReference type="GO" id="GO:0042806">
    <property type="term" value="F:fucose binding"/>
    <property type="evidence" value="ECO:0007669"/>
    <property type="project" value="InterPro"/>
</dbReference>
<dbReference type="GO" id="GO:0036373">
    <property type="term" value="F:L-fucose mutarotase activity"/>
    <property type="evidence" value="ECO:0007669"/>
    <property type="project" value="UniProtKB-EC"/>
</dbReference>
<dbReference type="GO" id="GO:0036065">
    <property type="term" value="P:fucosylation"/>
    <property type="evidence" value="ECO:0007669"/>
    <property type="project" value="TreeGrafter"/>
</dbReference>
<dbReference type="GO" id="GO:0042354">
    <property type="term" value="P:L-fucose metabolic process"/>
    <property type="evidence" value="ECO:0007669"/>
    <property type="project" value="UniProtKB-UniRule"/>
</dbReference>
<dbReference type="Gene3D" id="3.40.1650.10">
    <property type="entry name" value="RbsD-like domain"/>
    <property type="match status" value="1"/>
</dbReference>
<dbReference type="HAMAP" id="MF_01662">
    <property type="entry name" value="L_fucose_rotase"/>
    <property type="match status" value="1"/>
</dbReference>
<dbReference type="InterPro" id="IPR023751">
    <property type="entry name" value="L-fucose_mutarotase"/>
</dbReference>
<dbReference type="InterPro" id="IPR023750">
    <property type="entry name" value="RbsD-like_sf"/>
</dbReference>
<dbReference type="InterPro" id="IPR050443">
    <property type="entry name" value="RbsD/FucU_mutarotase"/>
</dbReference>
<dbReference type="InterPro" id="IPR007721">
    <property type="entry name" value="RbsD_FucU"/>
</dbReference>
<dbReference type="NCBIfam" id="NF011949">
    <property type="entry name" value="PRK15420.1"/>
    <property type="match status" value="1"/>
</dbReference>
<dbReference type="PANTHER" id="PTHR31690">
    <property type="entry name" value="FUCOSE MUTAROTASE"/>
    <property type="match status" value="1"/>
</dbReference>
<dbReference type="PANTHER" id="PTHR31690:SF4">
    <property type="entry name" value="FUCOSE MUTAROTASE"/>
    <property type="match status" value="1"/>
</dbReference>
<dbReference type="Pfam" id="PF05025">
    <property type="entry name" value="RbsD_FucU"/>
    <property type="match status" value="1"/>
</dbReference>
<dbReference type="SUPFAM" id="SSF102546">
    <property type="entry name" value="RbsD-like"/>
    <property type="match status" value="1"/>
</dbReference>
<sequence>MLKGIHPALSPELLKTLAEMGHGDEIVLADAHFPAHSLHKNVIRADGISIDILLEAITPLFEFDAYVDAPLLMMKAVEGDSLDPNVETRYLNAIESAVGFTPNLTSLERFDFYTRAKQAYAVVVSGEIAKYGNIIIKKGVTPIL</sequence>
<protein>
    <recommendedName>
        <fullName evidence="1">L-fucose mutarotase</fullName>
        <ecNumber evidence="1">5.1.3.29</ecNumber>
    </recommendedName>
    <alternativeName>
        <fullName evidence="1">Fucose 1-epimerase</fullName>
    </alternativeName>
    <alternativeName>
        <fullName evidence="1">Type-2 mutarotase</fullName>
    </alternativeName>
</protein>
<gene>
    <name evidence="1" type="primary">fucU</name>
    <name type="ordered locus">NTHI0867</name>
</gene>
<comment type="function">
    <text evidence="1">Involved in the anomeric conversion of L-fucose.</text>
</comment>
<comment type="catalytic activity">
    <reaction evidence="1">
        <text>alpha-L-fucose = beta-L-fucose</text>
        <dbReference type="Rhea" id="RHEA:25580"/>
        <dbReference type="ChEBI" id="CHEBI:42548"/>
        <dbReference type="ChEBI" id="CHEBI:42589"/>
        <dbReference type="EC" id="5.1.3.29"/>
    </reaction>
</comment>
<comment type="pathway">
    <text evidence="1">Carbohydrate metabolism; L-fucose metabolism.</text>
</comment>
<comment type="subunit">
    <text evidence="1">Homodecamer.</text>
</comment>
<comment type="subcellular location">
    <subcellularLocation>
        <location evidence="1">Cytoplasm</location>
    </subcellularLocation>
</comment>
<comment type="similarity">
    <text evidence="1">Belongs to the RbsD / FucU family. FucU mutarotase subfamily.</text>
</comment>
<keyword id="KW-0119">Carbohydrate metabolism</keyword>
<keyword id="KW-0963">Cytoplasm</keyword>
<keyword id="KW-0294">Fucose metabolism</keyword>
<keyword id="KW-0413">Isomerase</keyword>
<evidence type="ECO:0000255" key="1">
    <source>
        <dbReference type="HAMAP-Rule" id="MF_01662"/>
    </source>
</evidence>
<name>FUCM_HAEI8</name>
<accession>Q4QMI4</accession>
<reference key="1">
    <citation type="journal article" date="2005" name="J. Bacteriol.">
        <title>Genomic sequence of an otitis media isolate of nontypeable Haemophilus influenzae: comparative study with H. influenzae serotype d, strain KW20.</title>
        <authorList>
            <person name="Harrison A."/>
            <person name="Dyer D.W."/>
            <person name="Gillaspy A."/>
            <person name="Ray W.C."/>
            <person name="Mungur R."/>
            <person name="Carson M.B."/>
            <person name="Zhong H."/>
            <person name="Gipson J."/>
            <person name="Gipson M."/>
            <person name="Johnson L.S."/>
            <person name="Lewis L."/>
            <person name="Bakaletz L.O."/>
            <person name="Munson R.S. Jr."/>
        </authorList>
    </citation>
    <scope>NUCLEOTIDE SEQUENCE [LARGE SCALE GENOMIC DNA]</scope>
    <source>
        <strain>86-028NP</strain>
    </source>
</reference>
<proteinExistence type="inferred from homology"/>
<organism>
    <name type="scientific">Haemophilus influenzae (strain 86-028NP)</name>
    <dbReference type="NCBI Taxonomy" id="281310"/>
    <lineage>
        <taxon>Bacteria</taxon>
        <taxon>Pseudomonadati</taxon>
        <taxon>Pseudomonadota</taxon>
        <taxon>Gammaproteobacteria</taxon>
        <taxon>Pasteurellales</taxon>
        <taxon>Pasteurellaceae</taxon>
        <taxon>Haemophilus</taxon>
    </lineage>
</organism>